<protein>
    <recommendedName>
        <fullName evidence="1">Small ribosomal subunit protein uS4</fullName>
    </recommendedName>
    <alternativeName>
        <fullName evidence="2">30S ribosomal protein S4</fullName>
    </alternativeName>
</protein>
<reference key="1">
    <citation type="journal article" date="1998" name="Nature">
        <title>The complete genome of the hyperthermophilic bacterium Aquifex aeolicus.</title>
        <authorList>
            <person name="Deckert G."/>
            <person name="Warren P.V."/>
            <person name="Gaasterland T."/>
            <person name="Young W.G."/>
            <person name="Lenox A.L."/>
            <person name="Graham D.E."/>
            <person name="Overbeek R."/>
            <person name="Snead M.A."/>
            <person name="Keller M."/>
            <person name="Aujay M."/>
            <person name="Huber R."/>
            <person name="Feldman R.A."/>
            <person name="Short J.M."/>
            <person name="Olsen G.J."/>
            <person name="Swanson R.V."/>
        </authorList>
    </citation>
    <scope>NUCLEOTIDE SEQUENCE [LARGE SCALE GENOMIC DNA]</scope>
    <source>
        <strain>VF5</strain>
    </source>
</reference>
<organism>
    <name type="scientific">Aquifex aeolicus (strain VF5)</name>
    <dbReference type="NCBI Taxonomy" id="224324"/>
    <lineage>
        <taxon>Bacteria</taxon>
        <taxon>Pseudomonadati</taxon>
        <taxon>Aquificota</taxon>
        <taxon>Aquificia</taxon>
        <taxon>Aquificales</taxon>
        <taxon>Aquificaceae</taxon>
        <taxon>Aquifex</taxon>
    </lineage>
</organism>
<dbReference type="EMBL" id="AE000657">
    <property type="protein sequence ID" value="AAC06442.1"/>
    <property type="molecule type" value="Genomic_DNA"/>
</dbReference>
<dbReference type="PIR" id="A70307">
    <property type="entry name" value="A70307"/>
</dbReference>
<dbReference type="RefSeq" id="NP_213044.1">
    <property type="nucleotide sequence ID" value="NC_000918.1"/>
</dbReference>
<dbReference type="RefSeq" id="WP_010879982.1">
    <property type="nucleotide sequence ID" value="NC_000918.1"/>
</dbReference>
<dbReference type="SMR" id="O66484"/>
<dbReference type="FunCoup" id="O66484">
    <property type="interactions" value="544"/>
</dbReference>
<dbReference type="STRING" id="224324.aq_072"/>
<dbReference type="EnsemblBacteria" id="AAC06442">
    <property type="protein sequence ID" value="AAC06442"/>
    <property type="gene ID" value="aq_072"/>
</dbReference>
<dbReference type="KEGG" id="aae:aq_072"/>
<dbReference type="PATRIC" id="fig|224324.8.peg.62"/>
<dbReference type="eggNOG" id="COG0522">
    <property type="taxonomic scope" value="Bacteria"/>
</dbReference>
<dbReference type="HOGENOM" id="CLU_092403_0_1_0"/>
<dbReference type="InParanoid" id="O66484"/>
<dbReference type="OrthoDB" id="9803672at2"/>
<dbReference type="Proteomes" id="UP000000798">
    <property type="component" value="Chromosome"/>
</dbReference>
<dbReference type="GO" id="GO:0015935">
    <property type="term" value="C:small ribosomal subunit"/>
    <property type="evidence" value="ECO:0000318"/>
    <property type="project" value="GO_Central"/>
</dbReference>
<dbReference type="GO" id="GO:0019843">
    <property type="term" value="F:rRNA binding"/>
    <property type="evidence" value="ECO:0000318"/>
    <property type="project" value="GO_Central"/>
</dbReference>
<dbReference type="GO" id="GO:0003735">
    <property type="term" value="F:structural constituent of ribosome"/>
    <property type="evidence" value="ECO:0000318"/>
    <property type="project" value="GO_Central"/>
</dbReference>
<dbReference type="GO" id="GO:0042274">
    <property type="term" value="P:ribosomal small subunit biogenesis"/>
    <property type="evidence" value="ECO:0000318"/>
    <property type="project" value="GO_Central"/>
</dbReference>
<dbReference type="GO" id="GO:0006412">
    <property type="term" value="P:translation"/>
    <property type="evidence" value="ECO:0007669"/>
    <property type="project" value="UniProtKB-UniRule"/>
</dbReference>
<dbReference type="CDD" id="cd00165">
    <property type="entry name" value="S4"/>
    <property type="match status" value="1"/>
</dbReference>
<dbReference type="FunFam" id="3.10.290.10:FF:000001">
    <property type="entry name" value="30S ribosomal protein S4"/>
    <property type="match status" value="1"/>
</dbReference>
<dbReference type="Gene3D" id="1.10.1050.10">
    <property type="entry name" value="Ribosomal Protein S4 Delta 41, Chain A, domain 1"/>
    <property type="match status" value="1"/>
</dbReference>
<dbReference type="Gene3D" id="3.10.290.10">
    <property type="entry name" value="RNA-binding S4 domain"/>
    <property type="match status" value="1"/>
</dbReference>
<dbReference type="HAMAP" id="MF_01306_B">
    <property type="entry name" value="Ribosomal_uS4_B"/>
    <property type="match status" value="1"/>
</dbReference>
<dbReference type="InterPro" id="IPR022801">
    <property type="entry name" value="Ribosomal_uS4"/>
</dbReference>
<dbReference type="InterPro" id="IPR005709">
    <property type="entry name" value="Ribosomal_uS4_bac-type"/>
</dbReference>
<dbReference type="InterPro" id="IPR018079">
    <property type="entry name" value="Ribosomal_uS4_CS"/>
</dbReference>
<dbReference type="InterPro" id="IPR001912">
    <property type="entry name" value="Ribosomal_uS4_N"/>
</dbReference>
<dbReference type="InterPro" id="IPR002942">
    <property type="entry name" value="S4_RNA-bd"/>
</dbReference>
<dbReference type="InterPro" id="IPR036986">
    <property type="entry name" value="S4_RNA-bd_sf"/>
</dbReference>
<dbReference type="NCBIfam" id="NF003717">
    <property type="entry name" value="PRK05327.1"/>
    <property type="match status" value="1"/>
</dbReference>
<dbReference type="NCBIfam" id="TIGR01017">
    <property type="entry name" value="rpsD_bact"/>
    <property type="match status" value="1"/>
</dbReference>
<dbReference type="PANTHER" id="PTHR11831">
    <property type="entry name" value="30S 40S RIBOSOMAL PROTEIN"/>
    <property type="match status" value="1"/>
</dbReference>
<dbReference type="PANTHER" id="PTHR11831:SF4">
    <property type="entry name" value="SMALL RIBOSOMAL SUBUNIT PROTEIN US4M"/>
    <property type="match status" value="1"/>
</dbReference>
<dbReference type="Pfam" id="PF00163">
    <property type="entry name" value="Ribosomal_S4"/>
    <property type="match status" value="1"/>
</dbReference>
<dbReference type="Pfam" id="PF01479">
    <property type="entry name" value="S4"/>
    <property type="match status" value="1"/>
</dbReference>
<dbReference type="SMART" id="SM01390">
    <property type="entry name" value="Ribosomal_S4"/>
    <property type="match status" value="1"/>
</dbReference>
<dbReference type="SMART" id="SM00363">
    <property type="entry name" value="S4"/>
    <property type="match status" value="1"/>
</dbReference>
<dbReference type="SUPFAM" id="SSF55174">
    <property type="entry name" value="Alpha-L RNA-binding motif"/>
    <property type="match status" value="1"/>
</dbReference>
<dbReference type="PROSITE" id="PS00632">
    <property type="entry name" value="RIBOSOMAL_S4"/>
    <property type="match status" value="1"/>
</dbReference>
<dbReference type="PROSITE" id="PS50889">
    <property type="entry name" value="S4"/>
    <property type="match status" value="1"/>
</dbReference>
<name>RS4_AQUAE</name>
<sequence length="211" mass="24815">MGRYIGPWVKLDRRFGVVVSGKKSAPKILARRNYPPGQHGRKYGRRKKLTEYGLRLMEKQKLKFLYGGLREKQFKKYFDMASKSKENTGEMLLQYLERRLDNVVYRLGFASTRRQARQLVAHGHVLVNGKKVNIPSYLVEPGDVIEIKEKSRDIPFIKENLENVDPRSIPSWLELDKDNFRGRVVRLPENVQEYLEIPINLQYIVEFYSKV</sequence>
<comment type="function">
    <text evidence="1">One of the primary rRNA binding proteins, it binds directly to 16S rRNA where it nucleates assembly of the body of the 30S subunit.</text>
</comment>
<comment type="function">
    <text evidence="1">With S5 and S12 plays an important role in translational accuracy.</text>
</comment>
<comment type="subunit">
    <text evidence="1">Part of the 30S ribosomal subunit. Contacts protein S5. The interaction surface between S4 and S5 is involved in control of translational fidelity.</text>
</comment>
<comment type="similarity">
    <text evidence="1">Belongs to the universal ribosomal protein uS4 family.</text>
</comment>
<proteinExistence type="inferred from homology"/>
<evidence type="ECO:0000255" key="1">
    <source>
        <dbReference type="HAMAP-Rule" id="MF_01306"/>
    </source>
</evidence>
<evidence type="ECO:0000305" key="2"/>
<accession>O66484</accession>
<keyword id="KW-1185">Reference proteome</keyword>
<keyword id="KW-0687">Ribonucleoprotein</keyword>
<keyword id="KW-0689">Ribosomal protein</keyword>
<keyword id="KW-0694">RNA-binding</keyword>
<keyword id="KW-0699">rRNA-binding</keyword>
<feature type="chain" id="PRO_0000132329" description="Small ribosomal subunit protein uS4">
    <location>
        <begin position="1"/>
        <end position="211"/>
    </location>
</feature>
<feature type="domain" description="S4 RNA-binding" evidence="1">
    <location>
        <begin position="98"/>
        <end position="161"/>
    </location>
</feature>
<gene>
    <name evidence="1" type="primary">rpsD</name>
    <name type="ordered locus">aq_072</name>
</gene>